<reference key="1">
    <citation type="journal article" date="1991" name="J. Bacteriol.">
        <title>Molecular cloning, characterization, and nucleotide sequence of the rfc gene, which encodes an O-antigen polymerase of Salmonella typhimurium.</title>
        <authorList>
            <person name="Collins L.V."/>
            <person name="Hackett J."/>
        </authorList>
    </citation>
    <scope>NUCLEOTIDE SEQUENCE [GENOMIC DNA]</scope>
    <scope>PATHWAY</scope>
</reference>
<reference key="2">
    <citation type="journal article" date="2001" name="Nature">
        <title>Complete genome sequence of Salmonella enterica serovar Typhimurium LT2.</title>
        <authorList>
            <person name="McClelland M."/>
            <person name="Sanderson K.E."/>
            <person name="Spieth J."/>
            <person name="Clifton S.W."/>
            <person name="Latreille P."/>
            <person name="Courtney L."/>
            <person name="Porwollik S."/>
            <person name="Ali J."/>
            <person name="Dante M."/>
            <person name="Du F."/>
            <person name="Hou S."/>
            <person name="Layman D."/>
            <person name="Leonard S."/>
            <person name="Nguyen C."/>
            <person name="Scott K."/>
            <person name="Holmes A."/>
            <person name="Grewal N."/>
            <person name="Mulvaney E."/>
            <person name="Ryan E."/>
            <person name="Sun H."/>
            <person name="Florea L."/>
            <person name="Miller W."/>
            <person name="Stoneking T."/>
            <person name="Nhan M."/>
            <person name="Waterston R."/>
            <person name="Wilson R.K."/>
        </authorList>
    </citation>
    <scope>NUCLEOTIDE SEQUENCE [LARGE SCALE GENOMIC DNA]</scope>
    <source>
        <strain>LT2 / SGSC1412 / ATCC 700720</strain>
    </source>
</reference>
<name>WZY_SALTY</name>
<evidence type="ECO:0000250" key="1">
    <source>
        <dbReference type="UniProtKB" id="Q58YW1"/>
    </source>
</evidence>
<evidence type="ECO:0000255" key="2"/>
<evidence type="ECO:0000269" key="3">
    <source>
    </source>
</evidence>
<evidence type="ECO:0000303" key="4">
    <source>
    </source>
</evidence>
<proteinExistence type="inferred from homology"/>
<accession>P0A235</accession>
<accession>P26479</accession>
<feature type="chain" id="PRO_0000097301" description="O-antigen polymerase">
    <location>
        <begin position="1"/>
        <end position="407"/>
    </location>
</feature>
<feature type="transmembrane region" description="Helical" evidence="2">
    <location>
        <begin position="2"/>
        <end position="22"/>
    </location>
</feature>
<feature type="transmembrane region" description="Helical" evidence="2">
    <location>
        <begin position="31"/>
        <end position="51"/>
    </location>
</feature>
<feature type="transmembrane region" description="Helical" evidence="2">
    <location>
        <begin position="63"/>
        <end position="83"/>
    </location>
</feature>
<feature type="transmembrane region" description="Helical" evidence="2">
    <location>
        <begin position="101"/>
        <end position="121"/>
    </location>
</feature>
<feature type="transmembrane region" description="Helical" evidence="2">
    <location>
        <begin position="141"/>
        <end position="161"/>
    </location>
</feature>
<feature type="transmembrane region" description="Helical" evidence="2">
    <location>
        <begin position="168"/>
        <end position="185"/>
    </location>
</feature>
<feature type="transmembrane region" description="Helical" evidence="2">
    <location>
        <begin position="190"/>
        <end position="204"/>
    </location>
</feature>
<feature type="transmembrane region" description="Helical" evidence="2">
    <location>
        <begin position="211"/>
        <end position="231"/>
    </location>
</feature>
<feature type="transmembrane region" description="Helical" evidence="2">
    <location>
        <begin position="319"/>
        <end position="339"/>
    </location>
</feature>
<feature type="transmembrane region" description="Helical" evidence="2">
    <location>
        <begin position="356"/>
        <end position="376"/>
    </location>
</feature>
<feature type="transmembrane region" description="Helical" evidence="2">
    <location>
        <begin position="382"/>
        <end position="402"/>
    </location>
</feature>
<gene>
    <name evidence="4" type="primary">rfc</name>
    <name type="ordered locus">STM1332</name>
</gene>
<dbReference type="EC" id="2.4.99.27" evidence="1"/>
<dbReference type="EMBL" id="M60066">
    <property type="protein sequence ID" value="AAA27210.1"/>
    <property type="molecule type" value="Genomic_DNA"/>
</dbReference>
<dbReference type="EMBL" id="AE006468">
    <property type="protein sequence ID" value="AAL20257.1"/>
    <property type="molecule type" value="Genomic_DNA"/>
</dbReference>
<dbReference type="PIR" id="A43672">
    <property type="entry name" value="A43672"/>
</dbReference>
<dbReference type="RefSeq" id="NP_460298.1">
    <property type="nucleotide sequence ID" value="NC_003197.2"/>
</dbReference>
<dbReference type="RefSeq" id="WP_000905563.1">
    <property type="nucleotide sequence ID" value="NC_003197.2"/>
</dbReference>
<dbReference type="STRING" id="99287.STM1332"/>
<dbReference type="PaxDb" id="99287-STM1332"/>
<dbReference type="GeneID" id="1252850"/>
<dbReference type="KEGG" id="stm:STM1332"/>
<dbReference type="PATRIC" id="fig|99287.12.peg.1415"/>
<dbReference type="HOGENOM" id="CLU_057683_0_0_6"/>
<dbReference type="OMA" id="AYIFISS"/>
<dbReference type="BioCyc" id="MetaCyc:STM1332-MONOMER"/>
<dbReference type="BioCyc" id="SENT99287:STM1332-MONOMER"/>
<dbReference type="UniPathway" id="UPA00281"/>
<dbReference type="Proteomes" id="UP000001014">
    <property type="component" value="Chromosome"/>
</dbReference>
<dbReference type="GO" id="GO:0005886">
    <property type="term" value="C:plasma membrane"/>
    <property type="evidence" value="ECO:0007669"/>
    <property type="project" value="UniProtKB-SubCell"/>
</dbReference>
<dbReference type="GO" id="GO:0016740">
    <property type="term" value="F:transferase activity"/>
    <property type="evidence" value="ECO:0007669"/>
    <property type="project" value="UniProtKB-KW"/>
</dbReference>
<dbReference type="GO" id="GO:0009103">
    <property type="term" value="P:lipopolysaccharide biosynthetic process"/>
    <property type="evidence" value="ECO:0007669"/>
    <property type="project" value="UniProtKB-UniPathway"/>
</dbReference>
<dbReference type="NCBIfam" id="TIGR04370">
    <property type="entry name" value="glyco_rpt_poly"/>
    <property type="match status" value="1"/>
</dbReference>
<keyword id="KW-0997">Cell inner membrane</keyword>
<keyword id="KW-1003">Cell membrane</keyword>
<keyword id="KW-0448">Lipopolysaccharide biosynthesis</keyword>
<keyword id="KW-0472">Membrane</keyword>
<keyword id="KW-1185">Reference proteome</keyword>
<keyword id="KW-0808">Transferase</keyword>
<keyword id="KW-0812">Transmembrane</keyword>
<keyword id="KW-1133">Transmembrane helix</keyword>
<protein>
    <recommendedName>
        <fullName evidence="4">O-antigen polymerase</fullName>
        <ecNumber evidence="1">2.4.99.27</ecNumber>
    </recommendedName>
</protein>
<organism>
    <name type="scientific">Salmonella typhimurium (strain LT2 / SGSC1412 / ATCC 700720)</name>
    <dbReference type="NCBI Taxonomy" id="99287"/>
    <lineage>
        <taxon>Bacteria</taxon>
        <taxon>Pseudomonadati</taxon>
        <taxon>Pseudomonadota</taxon>
        <taxon>Gammaproteobacteria</taxon>
        <taxon>Enterobacterales</taxon>
        <taxon>Enterobacteriaceae</taxon>
        <taxon>Salmonella</taxon>
    </lineage>
</organism>
<sequence length="407" mass="47461">MLIISYIALCLLFIVYLYTLSVRIEGKIINVMVPYLIITVPTLYVFEGIFVYLSEVQNYTVEYLFFYTCYITYIASFVISYLYTQRKPIYNKSNTKNKPRYVFTSLLFTFLAFIIYLPVLMEFREYILSPRRIYELTRTGYGIYFYPSLMFSLVASICAFFTYKKSKLFCISIVLFNCILIFLHGNKGPIFSIFIAFILYLSYIENKKIKFMFLVKSFAVIAVIVTAFFAYTFTDGNPIENMANYSDYTRNAVLVASSNFDFMYGKLLMESEVYSRIPRAIWPDKPEDFGALYLAKVFFPDAFYRNQGAPAFGYGELYADFGLFTPVWLVISGVFKGVLAKYFSNKTQETKSAHYFIMFLFCIGISVIPVSMGWLFPEHLMIAFMVYIASSFVFSEHIRFVLLRNNK</sequence>
<comment type="function">
    <text evidence="1">Polymerase involved in the biosynthesis of the lipopolysaccharide (LPS) (By similarity). Catalyzes the polymerization of the O-antigen repeat units on the periplasmic face of the inner membrane, leading to the formation of the lipid-linked O-antigen molecule (By similarity).</text>
</comment>
<comment type="catalytic activity">
    <reaction evidence="1">
        <text>n lipid-linked O-antigen repeat units = a lipid-linked O antigen + (n-1) polyisoprenyl diphosphate.</text>
        <dbReference type="EC" id="2.4.99.27"/>
    </reaction>
</comment>
<comment type="pathway">
    <text evidence="3">Bacterial outer membrane biogenesis; LPS O-antigen biosynthesis.</text>
</comment>
<comment type="subcellular location">
    <subcellularLocation>
        <location evidence="1">Cell inner membrane</location>
        <topology evidence="2">Multi-pass membrane protein</topology>
    </subcellularLocation>
</comment>